<proteinExistence type="inferred from homology"/>
<dbReference type="EC" id="1.97.1.12" evidence="1"/>
<dbReference type="EMBL" id="AP009372">
    <property type="protein sequence ID" value="BAF50285.1"/>
    <property type="molecule type" value="Genomic_DNA"/>
</dbReference>
<dbReference type="RefSeq" id="YP_001123461.1">
    <property type="nucleotide sequence ID" value="NC_009271.1"/>
</dbReference>
<dbReference type="SMR" id="A4QKT0"/>
<dbReference type="GeneID" id="4962755"/>
<dbReference type="GO" id="GO:0009535">
    <property type="term" value="C:chloroplast thylakoid membrane"/>
    <property type="evidence" value="ECO:0007669"/>
    <property type="project" value="UniProtKB-SubCell"/>
</dbReference>
<dbReference type="GO" id="GO:0009522">
    <property type="term" value="C:photosystem I"/>
    <property type="evidence" value="ECO:0007669"/>
    <property type="project" value="UniProtKB-KW"/>
</dbReference>
<dbReference type="GO" id="GO:0051539">
    <property type="term" value="F:4 iron, 4 sulfur cluster binding"/>
    <property type="evidence" value="ECO:0007669"/>
    <property type="project" value="UniProtKB-KW"/>
</dbReference>
<dbReference type="GO" id="GO:0016168">
    <property type="term" value="F:chlorophyll binding"/>
    <property type="evidence" value="ECO:0007669"/>
    <property type="project" value="UniProtKB-KW"/>
</dbReference>
<dbReference type="GO" id="GO:0009055">
    <property type="term" value="F:electron transfer activity"/>
    <property type="evidence" value="ECO:0007669"/>
    <property type="project" value="UniProtKB-UniRule"/>
</dbReference>
<dbReference type="GO" id="GO:0000287">
    <property type="term" value="F:magnesium ion binding"/>
    <property type="evidence" value="ECO:0007669"/>
    <property type="project" value="UniProtKB-UniRule"/>
</dbReference>
<dbReference type="GO" id="GO:0016491">
    <property type="term" value="F:oxidoreductase activity"/>
    <property type="evidence" value="ECO:0007669"/>
    <property type="project" value="UniProtKB-KW"/>
</dbReference>
<dbReference type="GO" id="GO:0015979">
    <property type="term" value="P:photosynthesis"/>
    <property type="evidence" value="ECO:0007669"/>
    <property type="project" value="UniProtKB-UniRule"/>
</dbReference>
<dbReference type="FunFam" id="1.20.1130.10:FF:000001">
    <property type="entry name" value="Photosystem I P700 chlorophyll a apoprotein A2"/>
    <property type="match status" value="1"/>
</dbReference>
<dbReference type="Gene3D" id="1.20.1130.10">
    <property type="entry name" value="Photosystem I PsaA/PsaB"/>
    <property type="match status" value="1"/>
</dbReference>
<dbReference type="HAMAP" id="MF_00482">
    <property type="entry name" value="PSI_PsaB"/>
    <property type="match status" value="1"/>
</dbReference>
<dbReference type="InterPro" id="IPR001280">
    <property type="entry name" value="PSI_PsaA/B"/>
</dbReference>
<dbReference type="InterPro" id="IPR020586">
    <property type="entry name" value="PSI_PsaA/B_CS"/>
</dbReference>
<dbReference type="InterPro" id="IPR036408">
    <property type="entry name" value="PSI_PsaA/B_sf"/>
</dbReference>
<dbReference type="InterPro" id="IPR006244">
    <property type="entry name" value="PSI_PsaB"/>
</dbReference>
<dbReference type="NCBIfam" id="TIGR01336">
    <property type="entry name" value="psaB"/>
    <property type="match status" value="1"/>
</dbReference>
<dbReference type="PANTHER" id="PTHR30128">
    <property type="entry name" value="OUTER MEMBRANE PROTEIN, OMPA-RELATED"/>
    <property type="match status" value="1"/>
</dbReference>
<dbReference type="PANTHER" id="PTHR30128:SF19">
    <property type="entry name" value="PHOTOSYSTEM I P700 CHLOROPHYLL A APOPROTEIN A1-RELATED"/>
    <property type="match status" value="1"/>
</dbReference>
<dbReference type="Pfam" id="PF00223">
    <property type="entry name" value="PsaA_PsaB"/>
    <property type="match status" value="1"/>
</dbReference>
<dbReference type="PIRSF" id="PIRSF002905">
    <property type="entry name" value="PSI_A"/>
    <property type="match status" value="1"/>
</dbReference>
<dbReference type="PRINTS" id="PR00257">
    <property type="entry name" value="PHOTSYSPSAAB"/>
</dbReference>
<dbReference type="SUPFAM" id="SSF81558">
    <property type="entry name" value="Photosystem I subunits PsaA/PsaB"/>
    <property type="match status" value="1"/>
</dbReference>
<dbReference type="PROSITE" id="PS00419">
    <property type="entry name" value="PHOTOSYSTEM_I_PSAAB"/>
    <property type="match status" value="1"/>
</dbReference>
<name>PSAB_CRUWA</name>
<protein>
    <recommendedName>
        <fullName evidence="1">Photosystem I P700 chlorophyll a apoprotein A2</fullName>
        <ecNumber evidence="1">1.97.1.12</ecNumber>
    </recommendedName>
    <alternativeName>
        <fullName evidence="1">PSI-B</fullName>
    </alternativeName>
    <alternativeName>
        <fullName evidence="1">PsaB</fullName>
    </alternativeName>
</protein>
<organism>
    <name type="scientific">Crucihimalaya wallichii</name>
    <name type="common">Rock-cress</name>
    <name type="synonym">Arabidopsis campestris</name>
    <dbReference type="NCBI Taxonomy" id="78192"/>
    <lineage>
        <taxon>Eukaryota</taxon>
        <taxon>Viridiplantae</taxon>
        <taxon>Streptophyta</taxon>
        <taxon>Embryophyta</taxon>
        <taxon>Tracheophyta</taxon>
        <taxon>Spermatophyta</taxon>
        <taxon>Magnoliopsida</taxon>
        <taxon>eudicotyledons</taxon>
        <taxon>Gunneridae</taxon>
        <taxon>Pentapetalae</taxon>
        <taxon>rosids</taxon>
        <taxon>malvids</taxon>
        <taxon>Brassicales</taxon>
        <taxon>Brassicaceae</taxon>
        <taxon>Crucihimalayeae</taxon>
        <taxon>Crucihimalaya</taxon>
    </lineage>
</organism>
<reference key="1">
    <citation type="submission" date="2007-03" db="EMBL/GenBank/DDBJ databases">
        <title>Sequencing analysis of Crucihimalaya wallichii chloroplast DNA.</title>
        <authorList>
            <person name="Hosouchi T."/>
            <person name="Tsuruoka H."/>
            <person name="Kotani H."/>
        </authorList>
    </citation>
    <scope>NUCLEOTIDE SEQUENCE [LARGE SCALE GENOMIC DNA]</scope>
</reference>
<accession>A4QKT0</accession>
<comment type="function">
    <text evidence="1">PsaA and PsaB bind P700, the primary electron donor of photosystem I (PSI), as well as the electron acceptors A0, A1 and FX. PSI is a plastocyanin-ferredoxin oxidoreductase, converting photonic excitation into a charge separation, which transfers an electron from the donor P700 chlorophyll pair to the spectroscopically characterized acceptors A0, A1, FX, FA and FB in turn. Oxidized P700 is reduced on the lumenal side of the thylakoid membrane by plastocyanin.</text>
</comment>
<comment type="catalytic activity">
    <reaction evidence="1">
        <text>reduced [plastocyanin] + hnu + oxidized [2Fe-2S]-[ferredoxin] = oxidized [plastocyanin] + reduced [2Fe-2S]-[ferredoxin]</text>
        <dbReference type="Rhea" id="RHEA:30407"/>
        <dbReference type="Rhea" id="RHEA-COMP:10000"/>
        <dbReference type="Rhea" id="RHEA-COMP:10001"/>
        <dbReference type="Rhea" id="RHEA-COMP:10039"/>
        <dbReference type="Rhea" id="RHEA-COMP:10040"/>
        <dbReference type="ChEBI" id="CHEBI:29036"/>
        <dbReference type="ChEBI" id="CHEBI:30212"/>
        <dbReference type="ChEBI" id="CHEBI:33737"/>
        <dbReference type="ChEBI" id="CHEBI:33738"/>
        <dbReference type="ChEBI" id="CHEBI:49552"/>
        <dbReference type="EC" id="1.97.1.12"/>
    </reaction>
</comment>
<comment type="cofactor">
    <text evidence="1">P700 is a chlorophyll a/chlorophyll a' dimer, A0 is one or more chlorophyll a, A1 is one or both phylloquinones and FX is a shared 4Fe-4S iron-sulfur center.</text>
</comment>
<comment type="subunit">
    <text evidence="1">The PsaA/B heterodimer binds the P700 chlorophyll special pair and subsequent electron acceptors. PSI consists of a core antenna complex that captures photons, and an electron transfer chain that converts photonic excitation into a charge separation. The eukaryotic PSI reaction center is composed of at least 11 subunits.</text>
</comment>
<comment type="subcellular location">
    <subcellularLocation>
        <location evidence="1">Plastid</location>
        <location evidence="1">Chloroplast thylakoid membrane</location>
        <topology evidence="1">Multi-pass membrane protein</topology>
    </subcellularLocation>
</comment>
<comment type="similarity">
    <text evidence="1">Belongs to the PsaA/PsaB family.</text>
</comment>
<feature type="chain" id="PRO_0000300040" description="Photosystem I P700 chlorophyll a apoprotein A2">
    <location>
        <begin position="1"/>
        <end position="734"/>
    </location>
</feature>
<feature type="transmembrane region" description="Helical; Name=I" evidence="1">
    <location>
        <begin position="46"/>
        <end position="69"/>
    </location>
</feature>
<feature type="transmembrane region" description="Helical; Name=II" evidence="1">
    <location>
        <begin position="135"/>
        <end position="158"/>
    </location>
</feature>
<feature type="transmembrane region" description="Helical; Name=III" evidence="1">
    <location>
        <begin position="175"/>
        <end position="199"/>
    </location>
</feature>
<feature type="transmembrane region" description="Helical; Name=IV" evidence="1">
    <location>
        <begin position="273"/>
        <end position="291"/>
    </location>
</feature>
<feature type="transmembrane region" description="Helical; Name=V" evidence="1">
    <location>
        <begin position="330"/>
        <end position="353"/>
    </location>
</feature>
<feature type="transmembrane region" description="Helical; Name=VI" evidence="1">
    <location>
        <begin position="369"/>
        <end position="395"/>
    </location>
</feature>
<feature type="transmembrane region" description="Helical; Name=VII" evidence="1">
    <location>
        <begin position="417"/>
        <end position="439"/>
    </location>
</feature>
<feature type="transmembrane region" description="Helical; Name=VIII" evidence="1">
    <location>
        <begin position="517"/>
        <end position="535"/>
    </location>
</feature>
<feature type="transmembrane region" description="Helical; Name=IX" evidence="1">
    <location>
        <begin position="575"/>
        <end position="596"/>
    </location>
</feature>
<feature type="transmembrane region" description="Helical; Name=X" evidence="1">
    <location>
        <begin position="643"/>
        <end position="665"/>
    </location>
</feature>
<feature type="transmembrane region" description="Helical; Name=XI" evidence="1">
    <location>
        <begin position="707"/>
        <end position="727"/>
    </location>
</feature>
<feature type="binding site" evidence="1">
    <location>
        <position position="559"/>
    </location>
    <ligand>
        <name>[4Fe-4S] cluster</name>
        <dbReference type="ChEBI" id="CHEBI:49883"/>
        <note>ligand shared between dimeric partners</note>
    </ligand>
</feature>
<feature type="binding site" evidence="1">
    <location>
        <position position="568"/>
    </location>
    <ligand>
        <name>[4Fe-4S] cluster</name>
        <dbReference type="ChEBI" id="CHEBI:49883"/>
        <note>ligand shared between dimeric partners</note>
    </ligand>
</feature>
<feature type="binding site" description="axial binding residue" evidence="1">
    <location>
        <position position="654"/>
    </location>
    <ligand>
        <name>chlorophyll a</name>
        <dbReference type="ChEBI" id="CHEBI:58416"/>
        <label>B1</label>
    </ligand>
    <ligandPart>
        <name>Mg</name>
        <dbReference type="ChEBI" id="CHEBI:25107"/>
    </ligandPart>
</feature>
<feature type="binding site" description="axial binding residue" evidence="1">
    <location>
        <position position="662"/>
    </location>
    <ligand>
        <name>chlorophyll a</name>
        <dbReference type="ChEBI" id="CHEBI:58416"/>
        <label>B3</label>
    </ligand>
    <ligandPart>
        <name>Mg</name>
        <dbReference type="ChEBI" id="CHEBI:25107"/>
    </ligandPart>
</feature>
<feature type="binding site" evidence="1">
    <location>
        <position position="670"/>
    </location>
    <ligand>
        <name>chlorophyll a</name>
        <dbReference type="ChEBI" id="CHEBI:58416"/>
        <label>B3</label>
    </ligand>
</feature>
<feature type="binding site" evidence="1">
    <location>
        <position position="671"/>
    </location>
    <ligand>
        <name>phylloquinone</name>
        <dbReference type="ChEBI" id="CHEBI:18067"/>
        <label>B</label>
    </ligand>
</feature>
<geneLocation type="chloroplast"/>
<keyword id="KW-0004">4Fe-4S</keyword>
<keyword id="KW-0148">Chlorophyll</keyword>
<keyword id="KW-0150">Chloroplast</keyword>
<keyword id="KW-0157">Chromophore</keyword>
<keyword id="KW-0249">Electron transport</keyword>
<keyword id="KW-0408">Iron</keyword>
<keyword id="KW-0411">Iron-sulfur</keyword>
<keyword id="KW-0460">Magnesium</keyword>
<keyword id="KW-0472">Membrane</keyword>
<keyword id="KW-0479">Metal-binding</keyword>
<keyword id="KW-0560">Oxidoreductase</keyword>
<keyword id="KW-0602">Photosynthesis</keyword>
<keyword id="KW-0603">Photosystem I</keyword>
<keyword id="KW-0934">Plastid</keyword>
<keyword id="KW-0793">Thylakoid</keyword>
<keyword id="KW-0812">Transmembrane</keyword>
<keyword id="KW-1133">Transmembrane helix</keyword>
<keyword id="KW-0813">Transport</keyword>
<sequence length="734" mass="82399">MALRFPRFSQGLAQDPTTRRIWFGIATAHDFESHDDITEERLYQNIFASHFGQLAIIFLWTSGNLFHVAWQGNFETWVQDPLHVRPIAHAIWDPHFGQPAVEAFTRGGALGPVNIAYSGVYQWWYTIGLRTNEDLYTGALFLLFLSALSLIGGWLHLQPKWKPRVSWFKNAESRLNHHLSGLFGVSSLAWTGHLVHVAIPASRGESVRWNNFLNVLPHPQGLGPLFTGQWNLYAQNPDSSSHLFGTSQGSGTAILTLLGGFHPQTQSLWLTDMAHHHLAIAILFLIAGHMYRTNFGIGHSIKDLLEAHIPPGGRLGRGHKGLYDTINNSIHFQLGLALASLGVITSLVAQHMYSLPAYAFIAQDFTTQAALYTHHQYIAGFIMTGAFAHGAIFFIRDYNPEQNEDNVLARMLDHKEAIISHLSWASLFLGFHTLGLYVHNDVMLAFGTPEKQILIEPIFAQWIQSAHGKTSYGFDVLLSSTSGPAFNAGRSIWLPGWLNAINENSNSLFLTIGPGDFLVHHAIALGLHTTTLILVKGALDARGSKLMPDKKDFGYSFPCDGPGRGGTCDISAWDAFYLAVFWMLNTIGWVTFYWHWKHITLWQGNVSQFNESSTYLMGWLRDYLWLNSSQLINGYNPFGMNSLSVWAWMFLFGHLVWATGFMFLISWRGYWQELIETLAWAHERTPLANLIRWKDKPVALSIVQARLVGLAHFSVGYIFTYAAFLIASTSGKFG</sequence>
<evidence type="ECO:0000255" key="1">
    <source>
        <dbReference type="HAMAP-Rule" id="MF_00482"/>
    </source>
</evidence>
<gene>
    <name evidence="1" type="primary">psaB</name>
</gene>